<dbReference type="EMBL" id="CP000024">
    <property type="protein sequence ID" value="AAV62724.1"/>
    <property type="molecule type" value="Genomic_DNA"/>
</dbReference>
<dbReference type="RefSeq" id="WP_002950935.1">
    <property type="nucleotide sequence ID" value="NC_006449.1"/>
</dbReference>
<dbReference type="SMR" id="Q5LZH5"/>
<dbReference type="GeneID" id="66898973"/>
<dbReference type="KEGG" id="stc:str1179"/>
<dbReference type="HOGENOM" id="CLU_103507_2_1_9"/>
<dbReference type="GO" id="GO:0022625">
    <property type="term" value="C:cytosolic large ribosomal subunit"/>
    <property type="evidence" value="ECO:0007669"/>
    <property type="project" value="TreeGrafter"/>
</dbReference>
<dbReference type="GO" id="GO:0003735">
    <property type="term" value="F:structural constituent of ribosome"/>
    <property type="evidence" value="ECO:0007669"/>
    <property type="project" value="InterPro"/>
</dbReference>
<dbReference type="GO" id="GO:0006412">
    <property type="term" value="P:translation"/>
    <property type="evidence" value="ECO:0007669"/>
    <property type="project" value="UniProtKB-UniRule"/>
</dbReference>
<dbReference type="FunFam" id="2.30.30.790:FF:000001">
    <property type="entry name" value="50S ribosomal protein L19"/>
    <property type="match status" value="1"/>
</dbReference>
<dbReference type="Gene3D" id="2.30.30.790">
    <property type="match status" value="1"/>
</dbReference>
<dbReference type="HAMAP" id="MF_00402">
    <property type="entry name" value="Ribosomal_bL19"/>
    <property type="match status" value="1"/>
</dbReference>
<dbReference type="InterPro" id="IPR001857">
    <property type="entry name" value="Ribosomal_bL19"/>
</dbReference>
<dbReference type="InterPro" id="IPR018257">
    <property type="entry name" value="Ribosomal_bL19_CS"/>
</dbReference>
<dbReference type="InterPro" id="IPR038657">
    <property type="entry name" value="Ribosomal_bL19_sf"/>
</dbReference>
<dbReference type="InterPro" id="IPR008991">
    <property type="entry name" value="Translation_prot_SH3-like_sf"/>
</dbReference>
<dbReference type="NCBIfam" id="TIGR01024">
    <property type="entry name" value="rplS_bact"/>
    <property type="match status" value="1"/>
</dbReference>
<dbReference type="PANTHER" id="PTHR15680:SF9">
    <property type="entry name" value="LARGE RIBOSOMAL SUBUNIT PROTEIN BL19M"/>
    <property type="match status" value="1"/>
</dbReference>
<dbReference type="PANTHER" id="PTHR15680">
    <property type="entry name" value="RIBOSOMAL PROTEIN L19"/>
    <property type="match status" value="1"/>
</dbReference>
<dbReference type="Pfam" id="PF01245">
    <property type="entry name" value="Ribosomal_L19"/>
    <property type="match status" value="1"/>
</dbReference>
<dbReference type="PIRSF" id="PIRSF002191">
    <property type="entry name" value="Ribosomal_L19"/>
    <property type="match status" value="1"/>
</dbReference>
<dbReference type="PRINTS" id="PR00061">
    <property type="entry name" value="RIBOSOMALL19"/>
</dbReference>
<dbReference type="SUPFAM" id="SSF50104">
    <property type="entry name" value="Translation proteins SH3-like domain"/>
    <property type="match status" value="1"/>
</dbReference>
<dbReference type="PROSITE" id="PS01015">
    <property type="entry name" value="RIBOSOMAL_L19"/>
    <property type="match status" value="1"/>
</dbReference>
<evidence type="ECO:0000255" key="1">
    <source>
        <dbReference type="HAMAP-Rule" id="MF_00402"/>
    </source>
</evidence>
<evidence type="ECO:0000305" key="2"/>
<protein>
    <recommendedName>
        <fullName evidence="1">Large ribosomal subunit protein bL19</fullName>
    </recommendedName>
    <alternativeName>
        <fullName evidence="2">50S ribosomal protein L19</fullName>
    </alternativeName>
</protein>
<feature type="chain" id="PRO_0000163549" description="Large ribosomal subunit protein bL19">
    <location>
        <begin position="1"/>
        <end position="115"/>
    </location>
</feature>
<gene>
    <name evidence="1" type="primary">rplS</name>
    <name type="ordered locus">str1179</name>
</gene>
<comment type="function">
    <text evidence="1">This protein is located at the 30S-50S ribosomal subunit interface and may play a role in the structure and function of the aminoacyl-tRNA binding site.</text>
</comment>
<comment type="similarity">
    <text evidence="1">Belongs to the bacterial ribosomal protein bL19 family.</text>
</comment>
<sequence length="115" mass="13146">MNPLIQSLTEGQLRTDIPSFRPGDTVRVHAKVVEGTRERIQIFEGVVISRKGQGISEMYTVRKISSGIGVERTFPIHTPRVDKIEVVRYGKVRRAKLYYLRALQGKAARIKEIRK</sequence>
<reference key="1">
    <citation type="journal article" date="2004" name="Nat. Biotechnol.">
        <title>Complete sequence and comparative genome analysis of the dairy bacterium Streptococcus thermophilus.</title>
        <authorList>
            <person name="Bolotin A."/>
            <person name="Quinquis B."/>
            <person name="Renault P."/>
            <person name="Sorokin A."/>
            <person name="Ehrlich S.D."/>
            <person name="Kulakauskas S."/>
            <person name="Lapidus A."/>
            <person name="Goltsman E."/>
            <person name="Mazur M."/>
            <person name="Pusch G.D."/>
            <person name="Fonstein M."/>
            <person name="Overbeek R."/>
            <person name="Kyprides N."/>
            <person name="Purnelle B."/>
            <person name="Prozzi D."/>
            <person name="Ngui K."/>
            <person name="Masuy D."/>
            <person name="Hancy F."/>
            <person name="Burteau S."/>
            <person name="Boutry M."/>
            <person name="Delcour J."/>
            <person name="Goffeau A."/>
            <person name="Hols P."/>
        </authorList>
    </citation>
    <scope>NUCLEOTIDE SEQUENCE [LARGE SCALE GENOMIC DNA]</scope>
    <source>
        <strain>CNRZ 1066</strain>
    </source>
</reference>
<name>RL19_STRT1</name>
<organism>
    <name type="scientific">Streptococcus thermophilus (strain CNRZ 1066)</name>
    <dbReference type="NCBI Taxonomy" id="299768"/>
    <lineage>
        <taxon>Bacteria</taxon>
        <taxon>Bacillati</taxon>
        <taxon>Bacillota</taxon>
        <taxon>Bacilli</taxon>
        <taxon>Lactobacillales</taxon>
        <taxon>Streptococcaceae</taxon>
        <taxon>Streptococcus</taxon>
    </lineage>
</organism>
<keyword id="KW-0687">Ribonucleoprotein</keyword>
<keyword id="KW-0689">Ribosomal protein</keyword>
<accession>Q5LZH5</accession>
<proteinExistence type="inferred from homology"/>